<proteinExistence type="inferred from homology"/>
<keyword id="KW-0963">Cytoplasm</keyword>
<keyword id="KW-0647">Proteasome</keyword>
<evidence type="ECO:0000255" key="1">
    <source>
        <dbReference type="HAMAP-Rule" id="MF_00289"/>
    </source>
</evidence>
<evidence type="ECO:0000256" key="2">
    <source>
        <dbReference type="SAM" id="MobiDB-lite"/>
    </source>
</evidence>
<gene>
    <name evidence="1" type="primary">prcA</name>
    <name type="ordered locus">SGR_5860</name>
</gene>
<reference key="1">
    <citation type="journal article" date="2008" name="J. Bacteriol.">
        <title>Genome sequence of the streptomycin-producing microorganism Streptomyces griseus IFO 13350.</title>
        <authorList>
            <person name="Ohnishi Y."/>
            <person name="Ishikawa J."/>
            <person name="Hara H."/>
            <person name="Suzuki H."/>
            <person name="Ikenoya M."/>
            <person name="Ikeda H."/>
            <person name="Yamashita A."/>
            <person name="Hattori M."/>
            <person name="Horinouchi S."/>
        </authorList>
    </citation>
    <scope>NUCLEOTIDE SEQUENCE [LARGE SCALE GENOMIC DNA]</scope>
    <source>
        <strain>JCM 4626 / CBS 651.72 / NBRC 13350 / KCC S-0626 / ISP 5235</strain>
    </source>
</reference>
<name>PSA_STRGG</name>
<sequence>MSTPFYVSPQQAMADRAEYARKGIARGRSLVVLQYADGIVFVGENPSRALHKFSEIYDRIGFAAAGKYNEYENLRIGGVRYADLRGYTYDRDDVTARGLANVYAQTLGTIFSSAAEKPYEVELVVAEVGSEPEGDQIYRLPHDGSIVDEHGSVAVGGNSEQISTFLDQRHRDGMTLAEALKLAVQALSREPGGGEREIPAERLEVAVLDRTRPQQRKFKRIVGRQLARLLDTEAAGSTPTDAPSDTEDGDSTDGTDRADGTTDSTEETEK</sequence>
<protein>
    <recommendedName>
        <fullName evidence="1">Proteasome subunit alpha</fullName>
    </recommendedName>
    <alternativeName>
        <fullName evidence="1">20S proteasome alpha subunit</fullName>
    </alternativeName>
    <alternativeName>
        <fullName evidence="1">Proteasome core protein PrcA</fullName>
    </alternativeName>
</protein>
<dbReference type="EMBL" id="AP009493">
    <property type="protein sequence ID" value="BAG22689.1"/>
    <property type="molecule type" value="Genomic_DNA"/>
</dbReference>
<dbReference type="RefSeq" id="WP_012381576.1">
    <property type="nucleotide sequence ID" value="NC_010572.1"/>
</dbReference>
<dbReference type="SMR" id="B1W307"/>
<dbReference type="KEGG" id="sgr:SGR_5860"/>
<dbReference type="PATRIC" id="fig|455632.4.peg.6005"/>
<dbReference type="eggNOG" id="COG0638">
    <property type="taxonomic scope" value="Bacteria"/>
</dbReference>
<dbReference type="HOGENOM" id="CLU_071031_0_0_11"/>
<dbReference type="UniPathway" id="UPA00997"/>
<dbReference type="Proteomes" id="UP000001685">
    <property type="component" value="Chromosome"/>
</dbReference>
<dbReference type="GO" id="GO:0005737">
    <property type="term" value="C:cytoplasm"/>
    <property type="evidence" value="ECO:0007669"/>
    <property type="project" value="UniProtKB-SubCell"/>
</dbReference>
<dbReference type="GO" id="GO:0019773">
    <property type="term" value="C:proteasome core complex, alpha-subunit complex"/>
    <property type="evidence" value="ECO:0007669"/>
    <property type="project" value="UniProtKB-UniRule"/>
</dbReference>
<dbReference type="GO" id="GO:0004298">
    <property type="term" value="F:threonine-type endopeptidase activity"/>
    <property type="evidence" value="ECO:0007669"/>
    <property type="project" value="InterPro"/>
</dbReference>
<dbReference type="GO" id="GO:0019941">
    <property type="term" value="P:modification-dependent protein catabolic process"/>
    <property type="evidence" value="ECO:0007669"/>
    <property type="project" value="UniProtKB-UniRule"/>
</dbReference>
<dbReference type="GO" id="GO:0010498">
    <property type="term" value="P:proteasomal protein catabolic process"/>
    <property type="evidence" value="ECO:0007669"/>
    <property type="project" value="UniProtKB-UniRule"/>
</dbReference>
<dbReference type="CDD" id="cd01906">
    <property type="entry name" value="proteasome_protease_HslV"/>
    <property type="match status" value="1"/>
</dbReference>
<dbReference type="FunFam" id="3.60.20.10:FF:000023">
    <property type="entry name" value="Proteasome subunit alpha"/>
    <property type="match status" value="1"/>
</dbReference>
<dbReference type="Gene3D" id="3.60.20.10">
    <property type="entry name" value="Glutamine Phosphoribosylpyrophosphate, subunit 1, domain 1"/>
    <property type="match status" value="1"/>
</dbReference>
<dbReference type="HAMAP" id="MF_00289_B">
    <property type="entry name" value="Proteasome_A_B"/>
    <property type="match status" value="1"/>
</dbReference>
<dbReference type="InterPro" id="IPR029055">
    <property type="entry name" value="Ntn_hydrolases_N"/>
</dbReference>
<dbReference type="InterPro" id="IPR050115">
    <property type="entry name" value="Proteasome_alpha"/>
</dbReference>
<dbReference type="InterPro" id="IPR023332">
    <property type="entry name" value="Proteasome_alpha-type"/>
</dbReference>
<dbReference type="InterPro" id="IPR022296">
    <property type="entry name" value="Proteasome_asu_bac"/>
</dbReference>
<dbReference type="InterPro" id="IPR001353">
    <property type="entry name" value="Proteasome_sua/b"/>
</dbReference>
<dbReference type="NCBIfam" id="TIGR03691">
    <property type="entry name" value="20S_bact_alpha"/>
    <property type="match status" value="1"/>
</dbReference>
<dbReference type="PANTHER" id="PTHR11599">
    <property type="entry name" value="PROTEASOME SUBUNIT ALPHA/BETA"/>
    <property type="match status" value="1"/>
</dbReference>
<dbReference type="Pfam" id="PF00227">
    <property type="entry name" value="Proteasome"/>
    <property type="match status" value="1"/>
</dbReference>
<dbReference type="SUPFAM" id="SSF56235">
    <property type="entry name" value="N-terminal nucleophile aminohydrolases (Ntn hydrolases)"/>
    <property type="match status" value="1"/>
</dbReference>
<dbReference type="PROSITE" id="PS51475">
    <property type="entry name" value="PROTEASOME_ALPHA_2"/>
    <property type="match status" value="1"/>
</dbReference>
<accession>B1W307</accession>
<comment type="function">
    <text evidence="1">Component of the proteasome core, a large protease complex with broad specificity involved in protein degradation.</text>
</comment>
<comment type="activity regulation">
    <text evidence="1">The formation of the proteasomal ATPase ARC-20S proteasome complex, likely via the docking of the C-termini of ARC into the intersubunit pockets in the alpha-rings, may trigger opening of the gate for substrate entry. Interconversion between the open-gate and close-gate conformations leads to a dynamic regulation of the 20S proteasome proteolysis activity.</text>
</comment>
<comment type="pathway">
    <text evidence="1">Protein degradation; proteasomal Pup-dependent pathway.</text>
</comment>
<comment type="subunit">
    <text evidence="1">The 20S proteasome core is composed of 14 alpha and 14 beta subunits that assemble into four stacked heptameric rings, resulting in a barrel-shaped structure. The two inner rings, each composed of seven catalytic beta subunits, are sandwiched by two outer rings, each composed of seven alpha subunits. The catalytic chamber with the active sites is on the inside of the barrel. Has a gated structure, the ends of the cylinder being occluded by the N-termini of the alpha-subunits. Is capped by the proteasome-associated ATPase, ARC.</text>
</comment>
<comment type="subcellular location">
    <subcellularLocation>
        <location evidence="1">Cytoplasm</location>
    </subcellularLocation>
</comment>
<comment type="similarity">
    <text evidence="1">Belongs to the peptidase T1A family.</text>
</comment>
<organism>
    <name type="scientific">Streptomyces griseus subsp. griseus (strain JCM 4626 / CBS 651.72 / NBRC 13350 / KCC S-0626 / ISP 5235)</name>
    <dbReference type="NCBI Taxonomy" id="455632"/>
    <lineage>
        <taxon>Bacteria</taxon>
        <taxon>Bacillati</taxon>
        <taxon>Actinomycetota</taxon>
        <taxon>Actinomycetes</taxon>
        <taxon>Kitasatosporales</taxon>
        <taxon>Streptomycetaceae</taxon>
        <taxon>Streptomyces</taxon>
    </lineage>
</organism>
<feature type="chain" id="PRO_0000397177" description="Proteasome subunit alpha">
    <location>
        <begin position="1"/>
        <end position="270"/>
    </location>
</feature>
<feature type="region of interest" description="Disordered" evidence="2">
    <location>
        <begin position="229"/>
        <end position="270"/>
    </location>
</feature>
<feature type="compositionally biased region" description="Acidic residues" evidence="2">
    <location>
        <begin position="244"/>
        <end position="253"/>
    </location>
</feature>